<comment type="function">
    <text evidence="1">The RuvA-RuvB-RuvC complex processes Holliday junction (HJ) DNA during genetic recombination and DNA repair, while the RuvA-RuvB complex plays an important role in the rescue of blocked DNA replication forks via replication fork reversal (RFR). RuvA specifically binds to HJ cruciform DNA, conferring on it an open structure. The RuvB hexamer acts as an ATP-dependent pump, pulling dsDNA into and through the RuvAB complex. RuvB forms 2 homohexamers on either side of HJ DNA bound by 1 or 2 RuvA tetramers; 4 subunits per hexamer contact DNA at a time. Coordinated motions by a converter formed by DNA-disengaged RuvB subunits stimulates ATP hydrolysis and nucleotide exchange. Immobilization of the converter enables RuvB to convert the ATP-contained energy into a lever motion, pulling 2 nucleotides of DNA out of the RuvA tetramer per ATP hydrolyzed, thus driving DNA branch migration. The RuvB motors rotate together with the DNA substrate, which together with the progressing nucleotide cycle form the mechanistic basis for DNA recombination by continuous HJ branch migration. Branch migration allows RuvC to scan DNA until it finds its consensus sequence, where it cleaves and resolves cruciform DNA.</text>
</comment>
<comment type="catalytic activity">
    <reaction evidence="1">
        <text>ATP + H2O = ADP + phosphate + H(+)</text>
        <dbReference type="Rhea" id="RHEA:13065"/>
        <dbReference type="ChEBI" id="CHEBI:15377"/>
        <dbReference type="ChEBI" id="CHEBI:15378"/>
        <dbReference type="ChEBI" id="CHEBI:30616"/>
        <dbReference type="ChEBI" id="CHEBI:43474"/>
        <dbReference type="ChEBI" id="CHEBI:456216"/>
    </reaction>
</comment>
<comment type="subunit">
    <text evidence="1">Homohexamer. Forms an RuvA(8)-RuvB(12)-Holliday junction (HJ) complex. HJ DNA is sandwiched between 2 RuvA tetramers; dsDNA enters through RuvA and exits via RuvB. An RuvB hexamer assembles on each DNA strand where it exits the tetramer. Each RuvB hexamer is contacted by two RuvA subunits (via domain III) on 2 adjacent RuvB subunits; this complex drives branch migration. In the full resolvosome a probable DNA-RuvA(4)-RuvB(12)-RuvC(2) complex forms which resolves the HJ.</text>
</comment>
<comment type="subcellular location">
    <subcellularLocation>
        <location evidence="1">Cytoplasm</location>
    </subcellularLocation>
</comment>
<comment type="domain">
    <text evidence="1">Has 3 domains, the large (RuvB-L) and small ATPase (RuvB-S) domains and the C-terminal head (RuvB-H) domain. The head domain binds DNA, while the ATPase domains jointly bind ATP, ADP or are empty depending on the state of the subunit in the translocation cycle. During a single DNA translocation step the structure of each domain remains the same, but their relative positions change.</text>
</comment>
<comment type="similarity">
    <text evidence="1">Belongs to the RuvB family.</text>
</comment>
<evidence type="ECO:0000255" key="1">
    <source>
        <dbReference type="HAMAP-Rule" id="MF_00016"/>
    </source>
</evidence>
<sequence>MEERLVSGDVHREDVSLEYSLRPKFLHEYIGQDKVKDNLKVFIEAAKMREETLDHVLLYGPPGLGKTTLAAIIANEMGVHLRTTSGPAIERPGDLAAILTSLEPGDVLFIDEIHRLHRSVEEVLYPAMEDYCLDIIIGKGQTARSIRIDLPPFTLVGATTRAGALSAPLRDRFGVISRLEYYTTEHLTQIVMRTAEILHVDITAEAAVEIARRSRGTPRIANRLLRRVRDFAQVRGDGTITFLLAKEALELLQVDRLGLDHIDHKLIKAIMEKFGGGPVGIDTIAATIGEEAQTIEDVYEPYLLQIGFLQRTPRGRIVTPIAYEHFGMEVPKQ</sequence>
<protein>
    <recommendedName>
        <fullName evidence="1">Holliday junction branch migration complex subunit RuvB</fullName>
        <ecNumber evidence="1">3.6.4.-</ecNumber>
    </recommendedName>
</protein>
<accession>C5D5E8</accession>
<feature type="chain" id="PRO_1000201838" description="Holliday junction branch migration complex subunit RuvB">
    <location>
        <begin position="1"/>
        <end position="333"/>
    </location>
</feature>
<feature type="region of interest" description="Large ATPase domain (RuvB-L)" evidence="1">
    <location>
        <begin position="1"/>
        <end position="182"/>
    </location>
</feature>
<feature type="region of interest" description="Small ATPAse domain (RuvB-S)" evidence="1">
    <location>
        <begin position="183"/>
        <end position="253"/>
    </location>
</feature>
<feature type="region of interest" description="Head domain (RuvB-H)" evidence="1">
    <location>
        <begin position="256"/>
        <end position="333"/>
    </location>
</feature>
<feature type="binding site" evidence="1">
    <location>
        <position position="21"/>
    </location>
    <ligand>
        <name>ATP</name>
        <dbReference type="ChEBI" id="CHEBI:30616"/>
    </ligand>
</feature>
<feature type="binding site" evidence="1">
    <location>
        <position position="22"/>
    </location>
    <ligand>
        <name>ATP</name>
        <dbReference type="ChEBI" id="CHEBI:30616"/>
    </ligand>
</feature>
<feature type="binding site" evidence="1">
    <location>
        <position position="63"/>
    </location>
    <ligand>
        <name>ATP</name>
        <dbReference type="ChEBI" id="CHEBI:30616"/>
    </ligand>
</feature>
<feature type="binding site" evidence="1">
    <location>
        <position position="66"/>
    </location>
    <ligand>
        <name>ATP</name>
        <dbReference type="ChEBI" id="CHEBI:30616"/>
    </ligand>
</feature>
<feature type="binding site" evidence="1">
    <location>
        <position position="67"/>
    </location>
    <ligand>
        <name>ATP</name>
        <dbReference type="ChEBI" id="CHEBI:30616"/>
    </ligand>
</feature>
<feature type="binding site" evidence="1">
    <location>
        <position position="67"/>
    </location>
    <ligand>
        <name>Mg(2+)</name>
        <dbReference type="ChEBI" id="CHEBI:18420"/>
    </ligand>
</feature>
<feature type="binding site" evidence="1">
    <location>
        <position position="68"/>
    </location>
    <ligand>
        <name>ATP</name>
        <dbReference type="ChEBI" id="CHEBI:30616"/>
    </ligand>
</feature>
<feature type="binding site" evidence="1">
    <location>
        <begin position="129"/>
        <end position="131"/>
    </location>
    <ligand>
        <name>ATP</name>
        <dbReference type="ChEBI" id="CHEBI:30616"/>
    </ligand>
</feature>
<feature type="binding site" evidence="1">
    <location>
        <position position="172"/>
    </location>
    <ligand>
        <name>ATP</name>
        <dbReference type="ChEBI" id="CHEBI:30616"/>
    </ligand>
</feature>
<feature type="binding site" evidence="1">
    <location>
        <position position="182"/>
    </location>
    <ligand>
        <name>ATP</name>
        <dbReference type="ChEBI" id="CHEBI:30616"/>
    </ligand>
</feature>
<feature type="binding site" evidence="1">
    <location>
        <position position="219"/>
    </location>
    <ligand>
        <name>ATP</name>
        <dbReference type="ChEBI" id="CHEBI:30616"/>
    </ligand>
</feature>
<feature type="binding site" evidence="1">
    <location>
        <position position="311"/>
    </location>
    <ligand>
        <name>DNA</name>
        <dbReference type="ChEBI" id="CHEBI:16991"/>
    </ligand>
</feature>
<feature type="binding site" evidence="1">
    <location>
        <position position="316"/>
    </location>
    <ligand>
        <name>DNA</name>
        <dbReference type="ChEBI" id="CHEBI:16991"/>
    </ligand>
</feature>
<name>RUVB_GEOSW</name>
<dbReference type="EC" id="3.6.4.-" evidence="1"/>
<dbReference type="EMBL" id="CP001638">
    <property type="protein sequence ID" value="ACS25216.1"/>
    <property type="molecule type" value="Genomic_DNA"/>
</dbReference>
<dbReference type="SMR" id="C5D5E8"/>
<dbReference type="STRING" id="471223.GWCH70_2521"/>
<dbReference type="KEGG" id="gwc:GWCH70_2521"/>
<dbReference type="eggNOG" id="COG2255">
    <property type="taxonomic scope" value="Bacteria"/>
</dbReference>
<dbReference type="HOGENOM" id="CLU_055599_1_0_9"/>
<dbReference type="OrthoDB" id="9804478at2"/>
<dbReference type="GO" id="GO:0005737">
    <property type="term" value="C:cytoplasm"/>
    <property type="evidence" value="ECO:0007669"/>
    <property type="project" value="UniProtKB-SubCell"/>
</dbReference>
<dbReference type="GO" id="GO:0048476">
    <property type="term" value="C:Holliday junction resolvase complex"/>
    <property type="evidence" value="ECO:0007669"/>
    <property type="project" value="UniProtKB-UniRule"/>
</dbReference>
<dbReference type="GO" id="GO:0005524">
    <property type="term" value="F:ATP binding"/>
    <property type="evidence" value="ECO:0007669"/>
    <property type="project" value="UniProtKB-UniRule"/>
</dbReference>
<dbReference type="GO" id="GO:0016887">
    <property type="term" value="F:ATP hydrolysis activity"/>
    <property type="evidence" value="ECO:0007669"/>
    <property type="project" value="InterPro"/>
</dbReference>
<dbReference type="GO" id="GO:0000400">
    <property type="term" value="F:four-way junction DNA binding"/>
    <property type="evidence" value="ECO:0007669"/>
    <property type="project" value="UniProtKB-UniRule"/>
</dbReference>
<dbReference type="GO" id="GO:0009378">
    <property type="term" value="F:four-way junction helicase activity"/>
    <property type="evidence" value="ECO:0007669"/>
    <property type="project" value="InterPro"/>
</dbReference>
<dbReference type="GO" id="GO:0006310">
    <property type="term" value="P:DNA recombination"/>
    <property type="evidence" value="ECO:0007669"/>
    <property type="project" value="UniProtKB-UniRule"/>
</dbReference>
<dbReference type="GO" id="GO:0006281">
    <property type="term" value="P:DNA repair"/>
    <property type="evidence" value="ECO:0007669"/>
    <property type="project" value="UniProtKB-UniRule"/>
</dbReference>
<dbReference type="CDD" id="cd00009">
    <property type="entry name" value="AAA"/>
    <property type="match status" value="1"/>
</dbReference>
<dbReference type="FunFam" id="3.40.50.300:FF:000073">
    <property type="entry name" value="Holliday junction ATP-dependent DNA helicase RuvB"/>
    <property type="match status" value="1"/>
</dbReference>
<dbReference type="Gene3D" id="1.10.8.60">
    <property type="match status" value="1"/>
</dbReference>
<dbReference type="Gene3D" id="3.40.50.300">
    <property type="entry name" value="P-loop containing nucleotide triphosphate hydrolases"/>
    <property type="match status" value="1"/>
</dbReference>
<dbReference type="Gene3D" id="1.10.10.10">
    <property type="entry name" value="Winged helix-like DNA-binding domain superfamily/Winged helix DNA-binding domain"/>
    <property type="match status" value="1"/>
</dbReference>
<dbReference type="HAMAP" id="MF_00016">
    <property type="entry name" value="DNA_HJ_migration_RuvB"/>
    <property type="match status" value="1"/>
</dbReference>
<dbReference type="InterPro" id="IPR003593">
    <property type="entry name" value="AAA+_ATPase"/>
</dbReference>
<dbReference type="InterPro" id="IPR041445">
    <property type="entry name" value="AAA_lid_4"/>
</dbReference>
<dbReference type="InterPro" id="IPR004605">
    <property type="entry name" value="DNA_helicase_Holl-junc_RuvB"/>
</dbReference>
<dbReference type="InterPro" id="IPR027417">
    <property type="entry name" value="P-loop_NTPase"/>
</dbReference>
<dbReference type="InterPro" id="IPR008824">
    <property type="entry name" value="RuvB-like_N"/>
</dbReference>
<dbReference type="InterPro" id="IPR008823">
    <property type="entry name" value="RuvB_C"/>
</dbReference>
<dbReference type="InterPro" id="IPR036388">
    <property type="entry name" value="WH-like_DNA-bd_sf"/>
</dbReference>
<dbReference type="InterPro" id="IPR036390">
    <property type="entry name" value="WH_DNA-bd_sf"/>
</dbReference>
<dbReference type="NCBIfam" id="NF000868">
    <property type="entry name" value="PRK00080.1"/>
    <property type="match status" value="1"/>
</dbReference>
<dbReference type="NCBIfam" id="TIGR00635">
    <property type="entry name" value="ruvB"/>
    <property type="match status" value="1"/>
</dbReference>
<dbReference type="PANTHER" id="PTHR42848">
    <property type="match status" value="1"/>
</dbReference>
<dbReference type="PANTHER" id="PTHR42848:SF1">
    <property type="entry name" value="HOLLIDAY JUNCTION BRANCH MIGRATION COMPLEX SUBUNIT RUVB"/>
    <property type="match status" value="1"/>
</dbReference>
<dbReference type="Pfam" id="PF17864">
    <property type="entry name" value="AAA_lid_4"/>
    <property type="match status" value="1"/>
</dbReference>
<dbReference type="Pfam" id="PF05491">
    <property type="entry name" value="RuvB_C"/>
    <property type="match status" value="1"/>
</dbReference>
<dbReference type="Pfam" id="PF05496">
    <property type="entry name" value="RuvB_N"/>
    <property type="match status" value="1"/>
</dbReference>
<dbReference type="SMART" id="SM00382">
    <property type="entry name" value="AAA"/>
    <property type="match status" value="1"/>
</dbReference>
<dbReference type="SUPFAM" id="SSF52540">
    <property type="entry name" value="P-loop containing nucleoside triphosphate hydrolases"/>
    <property type="match status" value="1"/>
</dbReference>
<dbReference type="SUPFAM" id="SSF46785">
    <property type="entry name" value="Winged helix' DNA-binding domain"/>
    <property type="match status" value="1"/>
</dbReference>
<gene>
    <name evidence="1" type="primary">ruvB</name>
    <name type="ordered locus">GWCH70_2521</name>
</gene>
<proteinExistence type="inferred from homology"/>
<organism>
    <name type="scientific">Geobacillus sp. (strain WCH70)</name>
    <dbReference type="NCBI Taxonomy" id="471223"/>
    <lineage>
        <taxon>Bacteria</taxon>
        <taxon>Bacillati</taxon>
        <taxon>Bacillota</taxon>
        <taxon>Bacilli</taxon>
        <taxon>Bacillales</taxon>
        <taxon>Anoxybacillaceae</taxon>
        <taxon>Geobacillus</taxon>
    </lineage>
</organism>
<reference key="1">
    <citation type="submission" date="2009-06" db="EMBL/GenBank/DDBJ databases">
        <title>Complete sequence of chromosome of Geopacillus sp. WCH70.</title>
        <authorList>
            <consortium name="US DOE Joint Genome Institute"/>
            <person name="Lucas S."/>
            <person name="Copeland A."/>
            <person name="Lapidus A."/>
            <person name="Glavina del Rio T."/>
            <person name="Dalin E."/>
            <person name="Tice H."/>
            <person name="Bruce D."/>
            <person name="Goodwin L."/>
            <person name="Pitluck S."/>
            <person name="Chertkov O."/>
            <person name="Brettin T."/>
            <person name="Detter J.C."/>
            <person name="Han C."/>
            <person name="Larimer F."/>
            <person name="Land M."/>
            <person name="Hauser L."/>
            <person name="Kyrpides N."/>
            <person name="Mikhailova N."/>
            <person name="Brumm P."/>
            <person name="Mead D.A."/>
            <person name="Richardson P."/>
        </authorList>
    </citation>
    <scope>NUCLEOTIDE SEQUENCE [LARGE SCALE GENOMIC DNA]</scope>
    <source>
        <strain>WCH70</strain>
    </source>
</reference>
<keyword id="KW-0067">ATP-binding</keyword>
<keyword id="KW-0963">Cytoplasm</keyword>
<keyword id="KW-0227">DNA damage</keyword>
<keyword id="KW-0233">DNA recombination</keyword>
<keyword id="KW-0234">DNA repair</keyword>
<keyword id="KW-0238">DNA-binding</keyword>
<keyword id="KW-0378">Hydrolase</keyword>
<keyword id="KW-0547">Nucleotide-binding</keyword>